<feature type="peptide" id="PRO_0000044646" description="Brevinin-2">
    <location>
        <begin position="1"/>
        <end position="33"/>
    </location>
</feature>
<feature type="disulfide bond" evidence="1">
    <location>
        <begin position="27"/>
        <end position="33"/>
    </location>
</feature>
<sequence>GLLDSLKGFAATAGKGVLQSLLSTASCKLAKTC</sequence>
<evidence type="ECO:0000269" key="1">
    <source>
    </source>
</evidence>
<evidence type="ECO:0000305" key="2"/>
<dbReference type="PIR" id="JC1356">
    <property type="entry name" value="JC1356"/>
</dbReference>
<dbReference type="SMR" id="P32424"/>
<dbReference type="GO" id="GO:0005576">
    <property type="term" value="C:extracellular region"/>
    <property type="evidence" value="ECO:0007669"/>
    <property type="project" value="UniProtKB-SubCell"/>
</dbReference>
<dbReference type="GO" id="GO:0042742">
    <property type="term" value="P:defense response to bacterium"/>
    <property type="evidence" value="ECO:0007669"/>
    <property type="project" value="UniProtKB-KW"/>
</dbReference>
<dbReference type="GO" id="GO:0031640">
    <property type="term" value="P:killing of cells of another organism"/>
    <property type="evidence" value="ECO:0007669"/>
    <property type="project" value="UniProtKB-KW"/>
</dbReference>
<dbReference type="InterPro" id="IPR012521">
    <property type="entry name" value="Antimicrobial_frog_2"/>
</dbReference>
<dbReference type="Pfam" id="PF08023">
    <property type="entry name" value="Antimicrobial_2"/>
    <property type="match status" value="1"/>
</dbReference>
<protein>
    <recommendedName>
        <fullName>Brevinin-2</fullName>
    </recommendedName>
</protein>
<proteinExistence type="evidence at protein level"/>
<accession>P32424</accession>
<organism>
    <name type="scientific">Pelophylax porosus brevipodus</name>
    <name type="common">Nagoya Daruma pond frog</name>
    <name type="synonym">Rana brevipoda porosa</name>
    <dbReference type="NCBI Taxonomy" id="88447"/>
    <lineage>
        <taxon>Eukaryota</taxon>
        <taxon>Metazoa</taxon>
        <taxon>Chordata</taxon>
        <taxon>Craniata</taxon>
        <taxon>Vertebrata</taxon>
        <taxon>Euteleostomi</taxon>
        <taxon>Amphibia</taxon>
        <taxon>Batrachia</taxon>
        <taxon>Anura</taxon>
        <taxon>Neobatrachia</taxon>
        <taxon>Ranoidea</taxon>
        <taxon>Ranidae</taxon>
        <taxon>Pelophylax</taxon>
    </lineage>
</organism>
<reference key="1">
    <citation type="journal article" date="1992" name="Biochem. Biophys. Res. Commun.">
        <title>Brevinin-1 and -2, unique antimicrobial peptides from the skin of the frog, Rana brevipoda porsa.</title>
        <authorList>
            <person name="Morikawa N."/>
            <person name="Hagiwara K."/>
            <person name="Nakajima T."/>
        </authorList>
    </citation>
    <scope>PROTEIN SEQUENCE</scope>
    <scope>DISULFIDE BOND</scope>
    <source>
        <tissue>Skin secretion</tissue>
    </source>
</reference>
<keyword id="KW-0878">Amphibian defense peptide</keyword>
<keyword id="KW-0044">Antibiotic</keyword>
<keyword id="KW-0929">Antimicrobial</keyword>
<keyword id="KW-0204">Cytolysis</keyword>
<keyword id="KW-0903">Direct protein sequencing</keyword>
<keyword id="KW-1015">Disulfide bond</keyword>
<keyword id="KW-0354">Hemolysis</keyword>
<keyword id="KW-0964">Secreted</keyword>
<name>BR2_PELPV</name>
<comment type="function">
    <text>Shows antibacterial activity against representative Gram-negative and Gram-positive bacterial species, and a very high hemolytic activity.</text>
</comment>
<comment type="subcellular location">
    <subcellularLocation>
        <location>Secreted</location>
    </subcellularLocation>
</comment>
<comment type="tissue specificity">
    <text>Expressed by the skin glands.</text>
</comment>
<comment type="similarity">
    <text evidence="2">Belongs to the frog skin active peptide (FSAP) family. Brevinin subfamily.</text>
</comment>